<reference evidence="7 8" key="1">
    <citation type="journal article" date="2001" name="Immunogenetics">
        <title>Two novel genes FIND and LIND differentially expressed in deactivated and Listeria-infected human macrophages.</title>
        <authorList>
            <person name="Staege H."/>
            <person name="Brauchlin A."/>
            <person name="Schoedon G."/>
            <person name="Schaffner A."/>
        </authorList>
    </citation>
    <scope>NUCLEOTIDE SEQUENCE [MRNA] (ISOFORM 1)</scope>
    <scope>TISSUE SPECIFICITY</scope>
    <scope>INDUCTION</scope>
    <source>
        <tissue evidence="3">Macrophage</tissue>
        <tissue>Monocyte</tissue>
    </source>
</reference>
<reference key="2">
    <citation type="journal article" date="2007" name="J. Biol. Chem.">
        <title>LIND/ABIN-3 is a novel lipopolysaccharide-inducible inhibitor of NF-kappaB activation.</title>
        <authorList>
            <person name="Wullaert A."/>
            <person name="Verstrepen L."/>
            <person name="Van Huffel S."/>
            <person name="Adib-Conquy M."/>
            <person name="Cornelis S."/>
            <person name="Kreike M."/>
            <person name="Haegman M."/>
            <person name="El Bakkouri K."/>
            <person name="Sanders M."/>
            <person name="Verhelst K."/>
            <person name="Carpentier I."/>
            <person name="Cavaillon J.-M."/>
            <person name="Heyninck K."/>
            <person name="Beyaert R."/>
        </authorList>
    </citation>
    <scope>NUCLEOTIDE SEQUENCE [MRNA] (ISOFORM 1)</scope>
    <scope>FUNCTION</scope>
    <scope>INTERACTION WITH TNFAIP3</scope>
    <scope>TISSUE SPECIFICITY</scope>
    <scope>INDUCTION</scope>
</reference>
<reference evidence="7 9" key="3">
    <citation type="journal article" date="2004" name="Nat. Genet.">
        <title>Complete sequencing and characterization of 21,243 full-length human cDNAs.</title>
        <authorList>
            <person name="Ota T."/>
            <person name="Suzuki Y."/>
            <person name="Nishikawa T."/>
            <person name="Otsuki T."/>
            <person name="Sugiyama T."/>
            <person name="Irie R."/>
            <person name="Wakamatsu A."/>
            <person name="Hayashi K."/>
            <person name="Sato H."/>
            <person name="Nagai K."/>
            <person name="Kimura K."/>
            <person name="Makita H."/>
            <person name="Sekine M."/>
            <person name="Obayashi M."/>
            <person name="Nishi T."/>
            <person name="Shibahara T."/>
            <person name="Tanaka T."/>
            <person name="Ishii S."/>
            <person name="Yamamoto J."/>
            <person name="Saito K."/>
            <person name="Kawai Y."/>
            <person name="Isono Y."/>
            <person name="Nakamura Y."/>
            <person name="Nagahari K."/>
            <person name="Murakami K."/>
            <person name="Yasuda T."/>
            <person name="Iwayanagi T."/>
            <person name="Wagatsuma M."/>
            <person name="Shiratori A."/>
            <person name="Sudo H."/>
            <person name="Hosoiri T."/>
            <person name="Kaku Y."/>
            <person name="Kodaira H."/>
            <person name="Kondo H."/>
            <person name="Sugawara M."/>
            <person name="Takahashi M."/>
            <person name="Kanda K."/>
            <person name="Yokoi T."/>
            <person name="Furuya T."/>
            <person name="Kikkawa E."/>
            <person name="Omura Y."/>
            <person name="Abe K."/>
            <person name="Kamihara K."/>
            <person name="Katsuta N."/>
            <person name="Sato K."/>
            <person name="Tanikawa M."/>
            <person name="Yamazaki M."/>
            <person name="Ninomiya K."/>
            <person name="Ishibashi T."/>
            <person name="Yamashita H."/>
            <person name="Murakawa K."/>
            <person name="Fujimori K."/>
            <person name="Tanai H."/>
            <person name="Kimata M."/>
            <person name="Watanabe M."/>
            <person name="Hiraoka S."/>
            <person name="Chiba Y."/>
            <person name="Ishida S."/>
            <person name="Ono Y."/>
            <person name="Takiguchi S."/>
            <person name="Watanabe S."/>
            <person name="Yosida M."/>
            <person name="Hotuta T."/>
            <person name="Kusano J."/>
            <person name="Kanehori K."/>
            <person name="Takahashi-Fujii A."/>
            <person name="Hara H."/>
            <person name="Tanase T.-O."/>
            <person name="Nomura Y."/>
            <person name="Togiya S."/>
            <person name="Komai F."/>
            <person name="Hara R."/>
            <person name="Takeuchi K."/>
            <person name="Arita M."/>
            <person name="Imose N."/>
            <person name="Musashino K."/>
            <person name="Yuuki H."/>
            <person name="Oshima A."/>
            <person name="Sasaki N."/>
            <person name="Aotsuka S."/>
            <person name="Yoshikawa Y."/>
            <person name="Matsunawa H."/>
            <person name="Ichihara T."/>
            <person name="Shiohata N."/>
            <person name="Sano S."/>
            <person name="Moriya S."/>
            <person name="Momiyama H."/>
            <person name="Satoh N."/>
            <person name="Takami S."/>
            <person name="Terashima Y."/>
            <person name="Suzuki O."/>
            <person name="Nakagawa S."/>
            <person name="Senoh A."/>
            <person name="Mizoguchi H."/>
            <person name="Goto Y."/>
            <person name="Shimizu F."/>
            <person name="Wakebe H."/>
            <person name="Hishigaki H."/>
            <person name="Watanabe T."/>
            <person name="Sugiyama A."/>
            <person name="Takemoto M."/>
            <person name="Kawakami B."/>
            <person name="Yamazaki M."/>
            <person name="Watanabe K."/>
            <person name="Kumagai A."/>
            <person name="Itakura S."/>
            <person name="Fukuzumi Y."/>
            <person name="Fujimori Y."/>
            <person name="Komiyama M."/>
            <person name="Tashiro H."/>
            <person name="Tanigami A."/>
            <person name="Fujiwara T."/>
            <person name="Ono T."/>
            <person name="Yamada K."/>
            <person name="Fujii Y."/>
            <person name="Ozaki K."/>
            <person name="Hirao M."/>
            <person name="Ohmori Y."/>
            <person name="Kawabata A."/>
            <person name="Hikiji T."/>
            <person name="Kobatake N."/>
            <person name="Inagaki H."/>
            <person name="Ikema Y."/>
            <person name="Okamoto S."/>
            <person name="Okitani R."/>
            <person name="Kawakami T."/>
            <person name="Noguchi S."/>
            <person name="Itoh T."/>
            <person name="Shigeta K."/>
            <person name="Senba T."/>
            <person name="Matsumura K."/>
            <person name="Nakajima Y."/>
            <person name="Mizuno T."/>
            <person name="Morinaga M."/>
            <person name="Sasaki M."/>
            <person name="Togashi T."/>
            <person name="Oyama M."/>
            <person name="Hata H."/>
            <person name="Watanabe M."/>
            <person name="Komatsu T."/>
            <person name="Mizushima-Sugano J."/>
            <person name="Satoh T."/>
            <person name="Shirai Y."/>
            <person name="Takahashi Y."/>
            <person name="Nakagawa K."/>
            <person name="Okumura K."/>
            <person name="Nagase T."/>
            <person name="Nomura N."/>
            <person name="Kikuchi H."/>
            <person name="Masuho Y."/>
            <person name="Yamashita R."/>
            <person name="Nakai K."/>
            <person name="Yada T."/>
            <person name="Nakamura Y."/>
            <person name="Ohara O."/>
            <person name="Isogai T."/>
            <person name="Sugano S."/>
        </authorList>
    </citation>
    <scope>NUCLEOTIDE SEQUENCE [LARGE SCALE MRNA] (ISOFORMS 1; 2 AND 3)</scope>
    <source>
        <tissue evidence="9">Smooth muscle</tissue>
        <tissue>Spleen</tissue>
        <tissue>Thymus</tissue>
        <tissue>Umbilical cord blood</tissue>
    </source>
</reference>
<reference key="4">
    <citation type="journal article" date="2005" name="Nature">
        <title>Generation and annotation of the DNA sequences of human chromosomes 2 and 4.</title>
        <authorList>
            <person name="Hillier L.W."/>
            <person name="Graves T.A."/>
            <person name="Fulton R.S."/>
            <person name="Fulton L.A."/>
            <person name="Pepin K.H."/>
            <person name="Minx P."/>
            <person name="Wagner-McPherson C."/>
            <person name="Layman D."/>
            <person name="Wylie K."/>
            <person name="Sekhon M."/>
            <person name="Becker M.C."/>
            <person name="Fewell G.A."/>
            <person name="Delehaunty K.D."/>
            <person name="Miner T.L."/>
            <person name="Nash W.E."/>
            <person name="Kremitzki C."/>
            <person name="Oddy L."/>
            <person name="Du H."/>
            <person name="Sun H."/>
            <person name="Bradshaw-Cordum H."/>
            <person name="Ali J."/>
            <person name="Carter J."/>
            <person name="Cordes M."/>
            <person name="Harris A."/>
            <person name="Isak A."/>
            <person name="van Brunt A."/>
            <person name="Nguyen C."/>
            <person name="Du F."/>
            <person name="Courtney L."/>
            <person name="Kalicki J."/>
            <person name="Ozersky P."/>
            <person name="Abbott S."/>
            <person name="Armstrong J."/>
            <person name="Belter E.A."/>
            <person name="Caruso L."/>
            <person name="Cedroni M."/>
            <person name="Cotton M."/>
            <person name="Davidson T."/>
            <person name="Desai A."/>
            <person name="Elliott G."/>
            <person name="Erb T."/>
            <person name="Fronick C."/>
            <person name="Gaige T."/>
            <person name="Haakenson W."/>
            <person name="Haglund K."/>
            <person name="Holmes A."/>
            <person name="Harkins R."/>
            <person name="Kim K."/>
            <person name="Kruchowski S.S."/>
            <person name="Strong C.M."/>
            <person name="Grewal N."/>
            <person name="Goyea E."/>
            <person name="Hou S."/>
            <person name="Levy A."/>
            <person name="Martinka S."/>
            <person name="Mead K."/>
            <person name="McLellan M.D."/>
            <person name="Meyer R."/>
            <person name="Randall-Maher J."/>
            <person name="Tomlinson C."/>
            <person name="Dauphin-Kohlberg S."/>
            <person name="Kozlowicz-Reilly A."/>
            <person name="Shah N."/>
            <person name="Swearengen-Shahid S."/>
            <person name="Snider J."/>
            <person name="Strong J.T."/>
            <person name="Thompson J."/>
            <person name="Yoakum M."/>
            <person name="Leonard S."/>
            <person name="Pearman C."/>
            <person name="Trani L."/>
            <person name="Radionenko M."/>
            <person name="Waligorski J.E."/>
            <person name="Wang C."/>
            <person name="Rock S.M."/>
            <person name="Tin-Wollam A.-M."/>
            <person name="Maupin R."/>
            <person name="Latreille P."/>
            <person name="Wendl M.C."/>
            <person name="Yang S.-P."/>
            <person name="Pohl C."/>
            <person name="Wallis J.W."/>
            <person name="Spieth J."/>
            <person name="Bieri T.A."/>
            <person name="Berkowicz N."/>
            <person name="Nelson J.O."/>
            <person name="Osborne J."/>
            <person name="Ding L."/>
            <person name="Meyer R."/>
            <person name="Sabo A."/>
            <person name="Shotland Y."/>
            <person name="Sinha P."/>
            <person name="Wohldmann P.E."/>
            <person name="Cook L.L."/>
            <person name="Hickenbotham M.T."/>
            <person name="Eldred J."/>
            <person name="Williams D."/>
            <person name="Jones T.A."/>
            <person name="She X."/>
            <person name="Ciccarelli F.D."/>
            <person name="Izaurralde E."/>
            <person name="Taylor J."/>
            <person name="Schmutz J."/>
            <person name="Myers R.M."/>
            <person name="Cox D.R."/>
            <person name="Huang X."/>
            <person name="McPherson J.D."/>
            <person name="Mardis E.R."/>
            <person name="Clifton S.W."/>
            <person name="Warren W.C."/>
            <person name="Chinwalla A.T."/>
            <person name="Eddy S.R."/>
            <person name="Marra M.A."/>
            <person name="Ovcharenko I."/>
            <person name="Furey T.S."/>
            <person name="Miller W."/>
            <person name="Eichler E.E."/>
            <person name="Bork P."/>
            <person name="Suyama M."/>
            <person name="Torrents D."/>
            <person name="Waterston R.H."/>
            <person name="Wilson R.K."/>
        </authorList>
    </citation>
    <scope>NUCLEOTIDE SEQUENCE [LARGE SCALE GENOMIC DNA]</scope>
</reference>
<reference evidence="10" key="5">
    <citation type="submission" date="2005-09" db="EMBL/GenBank/DDBJ databases">
        <authorList>
            <person name="Mural R.J."/>
            <person name="Istrail S."/>
            <person name="Sutton G.G."/>
            <person name="Florea L."/>
            <person name="Halpern A.L."/>
            <person name="Mobarry C.M."/>
            <person name="Lippert R."/>
            <person name="Walenz B."/>
            <person name="Shatkay H."/>
            <person name="Dew I."/>
            <person name="Miller J.R."/>
            <person name="Flanigan M.J."/>
            <person name="Edwards N.J."/>
            <person name="Bolanos R."/>
            <person name="Fasulo D."/>
            <person name="Halldorsson B.V."/>
            <person name="Hannenhalli S."/>
            <person name="Turner R."/>
            <person name="Yooseph S."/>
            <person name="Lu F."/>
            <person name="Nusskern D.R."/>
            <person name="Shue B.C."/>
            <person name="Zheng X.H."/>
            <person name="Zhong F."/>
            <person name="Delcher A.L."/>
            <person name="Huson D.H."/>
            <person name="Kravitz S.A."/>
            <person name="Mouchard L."/>
            <person name="Reinert K."/>
            <person name="Remington K.A."/>
            <person name="Clark A.G."/>
            <person name="Waterman M.S."/>
            <person name="Eichler E.E."/>
            <person name="Adams M.D."/>
            <person name="Hunkapiller M.W."/>
            <person name="Myers E.W."/>
            <person name="Venter J.C."/>
        </authorList>
    </citation>
    <scope>NUCLEOTIDE SEQUENCE [LARGE SCALE GENOMIC DNA]</scope>
</reference>
<reference key="6">
    <citation type="journal article" date="2004" name="Genome Res.">
        <title>The status, quality, and expansion of the NIH full-length cDNA project: the Mammalian Gene Collection (MGC).</title>
        <authorList>
            <consortium name="The MGC Project Team"/>
        </authorList>
    </citation>
    <scope>NUCLEOTIDE SEQUENCE [LARGE SCALE MRNA] (ISOFORM 1)</scope>
</reference>
<reference key="7">
    <citation type="journal article" date="2008" name="Oncogene">
        <title>Ubiquitin binding mediates the NF-kappaB inhibitory potential of ABIN proteins.</title>
        <authorList>
            <person name="Wagner S."/>
            <person name="Carpentier I."/>
            <person name="Rogov V."/>
            <person name="Kreike M."/>
            <person name="Ikeda F."/>
            <person name="Lohr F."/>
            <person name="Wu C.J."/>
            <person name="Ashwell J.D."/>
            <person name="Dotsch V."/>
            <person name="Dikic I."/>
            <person name="Beyaert R."/>
        </authorList>
    </citation>
    <scope>UBIQUITIN-BINDING</scope>
    <scope>MUTAGENESIS OF 214-GLU-ARG-215</scope>
</reference>
<feature type="chain" id="PRO_0000072607" description="TNFAIP3-interacting protein 3">
    <location>
        <begin position="1"/>
        <end position="325"/>
    </location>
</feature>
<feature type="region of interest" description="Disordered" evidence="2">
    <location>
        <begin position="1"/>
        <end position="30"/>
    </location>
</feature>
<feature type="region of interest" description="Disordered" evidence="2">
    <location>
        <begin position="84"/>
        <end position="129"/>
    </location>
</feature>
<feature type="region of interest" description="Ubiquitin-binding domain (UBD)">
    <location>
        <begin position="190"/>
        <end position="248"/>
    </location>
</feature>
<feature type="coiled-coil region" evidence="1">
    <location>
        <begin position="27"/>
        <end position="265"/>
    </location>
</feature>
<feature type="compositionally biased region" description="Basic and acidic residues" evidence="2">
    <location>
        <begin position="17"/>
        <end position="28"/>
    </location>
</feature>
<feature type="splice variant" id="VSP_045101" description="In isoform 2." evidence="6">
    <original>M</original>
    <variation>MNKNEKHDDKLVMFTNQSEDSERCESMELDKKIQDLIERNASPHPKRFTPEAMPTHRNLCSLKTPGKTASM</variation>
    <location>
        <position position="1"/>
    </location>
</feature>
<feature type="splice variant" id="VSP_045102" description="In isoform 3." evidence="6">
    <original>M</original>
    <variation>MIPCGWLMNKNEKHDDKLVMFTNQSEDSERCESMELDKKIQDLIERNASPHPKRFTPEAMPTHRNLCSLKTPGKTASM</variation>
    <location>
        <position position="1"/>
    </location>
</feature>
<feature type="splice variant" id="VSP_045103" description="In isoform 2 and isoform 3." evidence="6">
    <original>PDYQWYALDQLPPDVQHKANGLSSVKKVHP</original>
    <variation>VYPQ</variation>
    <location>
        <begin position="296"/>
        <end position="325"/>
    </location>
</feature>
<feature type="sequence variant" id="VAR_057006" description="In dbSNP:rs10000692.">
    <original>K</original>
    <variation>E</variation>
    <location>
        <position position="99"/>
    </location>
</feature>
<feature type="mutagenesis site" description="Abolishes ubiquitin binding; loss of inhibitory activity on NF-kappa-B activation." evidence="5">
    <original>ER</original>
    <variation>AA</variation>
    <location>
        <begin position="214"/>
        <end position="215"/>
    </location>
</feature>
<feature type="sequence conflict" description="In Ref. 6; AAI28409." evidence="7" ref="6">
    <original>Q</original>
    <variation>H</variation>
    <location>
        <position position="109"/>
    </location>
</feature>
<feature type="sequence conflict" description="In Ref. 1; AAL02151." evidence="7" ref="1">
    <original>Y</original>
    <variation>C</variation>
    <location>
        <position position="298"/>
    </location>
</feature>
<comment type="function">
    <text evidence="4">Binds to zinc finger protein TNFAIP3 and inhibits NF-kappa-B activation induced by tumor necrosis factor, Toll-like receptor 4 (TLR4), interleukin-1 and 12-O-tetradecanoylphorbol-13-acetate. Overexpression inhibits NF-kappa-B-dependent gene expression in response to lipopolysaccharide at a level downstream of TRAF6 and upstream of IKBKB. NF-kappa-B inhibition is independent of TNFAIP3 binding.</text>
</comment>
<comment type="subunit">
    <text evidence="4">Interacts with TNFAIP3. Interacts with polyubiquitin.</text>
</comment>
<comment type="interaction">
    <interactant intactId="EBI-2509913">
        <id>Q96KP6</id>
    </interactant>
    <interactant intactId="EBI-11954292">
        <id>Q86V38</id>
        <label>ATN1</label>
    </interactant>
    <organismsDiffer>false</organismsDiffer>
    <experiments>3</experiments>
</comment>
<comment type="interaction">
    <interactant intactId="EBI-2509913">
        <id>Q96KP6</id>
    </interactant>
    <interactant intactId="EBI-3904822">
        <id>P48745</id>
        <label>CCN3</label>
    </interactant>
    <organismsDiffer>false</organismsDiffer>
    <experiments>3</experiments>
</comment>
<comment type="interaction">
    <interactant intactId="EBI-2509913">
        <id>Q96KP6</id>
    </interactant>
    <interactant intactId="EBI-6875961">
        <id>P02489</id>
        <label>CRYAA</label>
    </interactant>
    <organismsDiffer>false</organismsDiffer>
    <experiments>3</experiments>
</comment>
<comment type="interaction">
    <interactant intactId="EBI-2509913">
        <id>Q96KP6</id>
    </interactant>
    <interactant intactId="EBI-3867333">
        <id>A8MQ03</id>
        <label>CYSRT1</label>
    </interactant>
    <organismsDiffer>false</organismsDiffer>
    <experiments>3</experiments>
</comment>
<comment type="interaction">
    <interactant intactId="EBI-2509913">
        <id>Q96KP6</id>
    </interactant>
    <interactant intactId="EBI-724310">
        <id>Q15038</id>
        <label>DAZAP2</label>
    </interactant>
    <organismsDiffer>false</organismsDiffer>
    <experiments>9</experiments>
</comment>
<comment type="interaction">
    <interactant intactId="EBI-2509913">
        <id>Q96KP6</id>
    </interactant>
    <interactant intactId="EBI-10976677">
        <id>G5E9A7</id>
        <label>DMWD</label>
    </interactant>
    <organismsDiffer>false</organismsDiffer>
    <experiments>3</experiments>
</comment>
<comment type="interaction">
    <interactant intactId="EBI-2509913">
        <id>Q96KP6</id>
    </interactant>
    <interactant intactId="EBI-719941">
        <id>Q3B820</id>
        <label>FAM161A</label>
    </interactant>
    <organismsDiffer>false</organismsDiffer>
    <experiments>3</experiments>
</comment>
<comment type="interaction">
    <interactant intactId="EBI-2509913">
        <id>Q96KP6</id>
    </interactant>
    <interactant intactId="EBI-466029">
        <id>P42858</id>
        <label>HTT</label>
    </interactant>
    <organismsDiffer>false</organismsDiffer>
    <experiments>9</experiments>
</comment>
<comment type="interaction">
    <interactant intactId="EBI-2509913">
        <id>Q96KP6</id>
    </interactant>
    <interactant intactId="EBI-2432309">
        <id>Q92876</id>
        <label>KLK6</label>
    </interactant>
    <organismsDiffer>false</organismsDiffer>
    <experiments>3</experiments>
</comment>
<comment type="interaction">
    <interactant intactId="EBI-2509913">
        <id>Q96KP6</id>
    </interactant>
    <interactant intactId="EBI-358297">
        <id>O00505</id>
        <label>KPNA3</label>
    </interactant>
    <organismsDiffer>false</organismsDiffer>
    <experiments>3</experiments>
</comment>
<comment type="interaction">
    <interactant intactId="EBI-2509913">
        <id>Q96KP6</id>
    </interactant>
    <interactant intactId="EBI-10171697">
        <id>Q6A162</id>
        <label>KRT40</label>
    </interactant>
    <organismsDiffer>false</organismsDiffer>
    <experiments>4</experiments>
</comment>
<comment type="interaction">
    <interactant intactId="EBI-2509913">
        <id>Q96KP6</id>
    </interactant>
    <interactant intactId="EBI-10171774">
        <id>P60410</id>
        <label>KRTAP10-8</label>
    </interactant>
    <organismsDiffer>false</organismsDiffer>
    <experiments>3</experiments>
</comment>
<comment type="interaction">
    <interactant intactId="EBI-2509913">
        <id>Q96KP6</id>
    </interactant>
    <interactant intactId="EBI-725647">
        <id>Q99732</id>
        <label>LITAF</label>
    </interactant>
    <organismsDiffer>false</organismsDiffer>
    <experiments>3</experiments>
</comment>
<comment type="interaction">
    <interactant intactId="EBI-2509913">
        <id>Q96KP6</id>
    </interactant>
    <interactant intactId="EBI-351935">
        <id>P02545</id>
        <label>LMNA</label>
    </interactant>
    <organismsDiffer>false</organismsDiffer>
    <experiments>3</experiments>
</comment>
<comment type="interaction">
    <interactant intactId="EBI-2509913">
        <id>Q96KP6</id>
    </interactant>
    <interactant intactId="EBI-741037">
        <id>Q9BRK4</id>
        <label>LZTS2</label>
    </interactant>
    <organismsDiffer>false</organismsDiffer>
    <experiments>6</experiments>
</comment>
<comment type="interaction">
    <interactant intactId="EBI-2509913">
        <id>Q96KP6</id>
    </interactant>
    <interactant intactId="EBI-5650739">
        <id>P43356</id>
        <label>MAGEA2B</label>
    </interactant>
    <organismsDiffer>false</organismsDiffer>
    <experiments>3</experiments>
</comment>
<comment type="interaction">
    <interactant intactId="EBI-2509913">
        <id>Q96KP6</id>
    </interactant>
    <interactant intactId="EBI-11522433">
        <id>Q5JR59-3</id>
        <label>MTUS2</label>
    </interactant>
    <organismsDiffer>false</organismsDiffer>
    <experiments>3</experiments>
</comment>
<comment type="interaction">
    <interactant intactId="EBI-2509913">
        <id>Q96KP6</id>
    </interactant>
    <interactant intactId="EBI-1014472">
        <id>P35240</id>
        <label>NF2</label>
    </interactant>
    <organismsDiffer>false</organismsDiffer>
    <experiments>3</experiments>
</comment>
<comment type="interaction">
    <interactant intactId="EBI-2509913">
        <id>Q96KP6</id>
    </interactant>
    <interactant intactId="EBI-945833">
        <id>Q7Z3S9</id>
        <label>NOTCH2NLA</label>
    </interactant>
    <organismsDiffer>false</organismsDiffer>
    <experiments>3</experiments>
</comment>
<comment type="interaction">
    <interactant intactId="EBI-2509913">
        <id>Q96KP6</id>
    </interactant>
    <interactant intactId="EBI-22310682">
        <id>P0DPK4</id>
        <label>NOTCH2NLC</label>
    </interactant>
    <organismsDiffer>false</organismsDiffer>
    <experiments>3</experiments>
</comment>
<comment type="interaction">
    <interactant intactId="EBI-2509913">
        <id>Q96KP6</id>
    </interactant>
    <interactant intactId="EBI-741158">
        <id>Q96HA8</id>
        <label>NTAQ1</label>
    </interactant>
    <organismsDiffer>false</organismsDiffer>
    <experiments>3</experiments>
</comment>
<comment type="interaction">
    <interactant intactId="EBI-2509913">
        <id>Q96KP6</id>
    </interactant>
    <interactant intactId="EBI-14066006">
        <id>Q4G0R1</id>
        <label>PIBF1</label>
    </interactant>
    <organismsDiffer>false</organismsDiffer>
    <experiments>3</experiments>
</comment>
<comment type="interaction">
    <interactant intactId="EBI-2509913">
        <id>Q96KP6</id>
    </interactant>
    <interactant intactId="EBI-750734">
        <id>Q9NRY6</id>
        <label>PLSCR3</label>
    </interactant>
    <organismsDiffer>false</organismsDiffer>
    <experiments>3</experiments>
</comment>
<comment type="interaction">
    <interactant intactId="EBI-2509913">
        <id>Q96KP6</id>
    </interactant>
    <interactant intactId="EBI-50433196">
        <id>A0A6Q8PF08</id>
        <label>PMP22</label>
    </interactant>
    <organismsDiffer>false</organismsDiffer>
    <experiments>3</experiments>
</comment>
<comment type="interaction">
    <interactant intactId="EBI-2509913">
        <id>Q96KP6</id>
    </interactant>
    <interactant intactId="EBI-5235340">
        <id>Q7Z699</id>
        <label>SPRED1</label>
    </interactant>
    <organismsDiffer>false</organismsDiffer>
    <experiments>3</experiments>
</comment>
<comment type="interaction">
    <interactant intactId="EBI-2509913">
        <id>Q96KP6</id>
    </interactant>
    <interactant intactId="EBI-529518">
        <id>Q86VP1</id>
        <label>TAX1BP1</label>
    </interactant>
    <organismsDiffer>false</organismsDiffer>
    <experiments>7</experiments>
</comment>
<comment type="interaction">
    <interactant intactId="EBI-2509913">
        <id>Q96KP6</id>
    </interactant>
    <interactant intactId="EBI-11955057">
        <id>Q8N8B7-2</id>
        <label>TCEANC</label>
    </interactant>
    <organismsDiffer>false</organismsDiffer>
    <experiments>3</experiments>
</comment>
<comment type="interaction">
    <interactant intactId="EBI-2509913">
        <id>Q96KP6</id>
    </interactant>
    <interactant intactId="EBI-527670">
        <id>P21580</id>
        <label>TNFAIP3</label>
    </interactant>
    <organismsDiffer>false</organismsDiffer>
    <experiments>3</experiments>
</comment>
<comment type="interaction">
    <interactant intactId="EBI-2509913">
        <id>Q96KP6</id>
    </interactant>
    <interactant intactId="EBI-357849">
        <id>Q15025</id>
        <label>TNIP1</label>
    </interactant>
    <organismsDiffer>false</organismsDiffer>
    <experiments>6</experiments>
</comment>
<comment type="interaction">
    <interactant intactId="EBI-2509913">
        <id>Q96KP6</id>
    </interactant>
    <interactant intactId="EBI-2340370">
        <id>Q9BZR9</id>
        <label>TRIM8</label>
    </interactant>
    <organismsDiffer>false</organismsDiffer>
    <experiments>3</experiments>
</comment>
<comment type="interaction">
    <interactant intactId="EBI-2509913">
        <id>Q96KP6</id>
    </interactant>
    <interactant intactId="EBI-742740">
        <id>Q96BR9</id>
        <label>ZBTB8A</label>
    </interactant>
    <organismsDiffer>false</organismsDiffer>
    <experiments>3</experiments>
</comment>
<comment type="alternative products">
    <event type="alternative splicing"/>
    <isoform>
        <id>Q96KP6-1</id>
        <name>1</name>
        <sequence type="displayed"/>
    </isoform>
    <isoform>
        <id>Q96KP6-2</id>
        <name>2</name>
        <sequence type="described" ref="VSP_045101 VSP_045103"/>
    </isoform>
    <isoform>
        <id>Q96KP6-3</id>
        <name>3</name>
        <sequence type="described" ref="VSP_045102 VSP_045103"/>
    </isoform>
</comment>
<comment type="tissue specificity">
    <text evidence="3 4">Highly expressed in lung, lymph node, thymus and fetal liver. Expressed at lower levels in bone marrow, brain, kidney, spleen, leukocytes and tonsils. Could be detected in heart, salivary gland, adrenal gland, pancreas, ovary and fetal brain. High levels detected in liver, colon, small intestine, muscle, stomach, testis, placenta, thyroid, uterus, prostate, skin and PBL.</text>
</comment>
<comment type="induction">
    <text evidence="3 4">By Listeria infection. Expression is slightly down-regulated by dexamethasone and slightly up-regulated by IL-10. Strongly induced mRNA and protein expression by lipopolysaccharide.</text>
</comment>
<comment type="sequence caution" evidence="7">
    <conflict type="erroneous initiation">
        <sequence resource="EMBL-CDS" id="BAB15018"/>
    </conflict>
    <text>Truncated N-terminus.</text>
</comment>
<comment type="sequence caution" evidence="7">
    <conflict type="frameshift">
        <sequence resource="EMBL-CDS" id="BAB15018"/>
    </conflict>
</comment>
<comment type="sequence caution" evidence="7">
    <conflict type="frameshift">
        <sequence resource="EMBL-CDS" id="CAC85929"/>
    </conflict>
</comment>
<protein>
    <recommendedName>
        <fullName>TNFAIP3-interacting protein 3</fullName>
    </recommendedName>
    <alternativeName>
        <fullName>A20-binding inhibitor of NF-kappa-B activation 3</fullName>
        <shortName>ABIN-3</shortName>
    </alternativeName>
    <alternativeName>
        <fullName>Listeria-induced gene protein</fullName>
    </alternativeName>
</protein>
<name>TNIP3_HUMAN</name>
<proteinExistence type="evidence at protein level"/>
<gene>
    <name evidence="11" type="primary">TNIP3</name>
    <name type="synonym">ABIN3</name>
    <name type="synonym">LIND</name>
</gene>
<accession>Q96KP6</accession>
<accession>A1A574</accession>
<accession>A8K2Z4</accession>
<accession>B4DVF5</accession>
<accession>B4E023</accession>
<accession>Q96PQ3</accession>
<accession>Q9H780</accession>
<keyword id="KW-0025">Alternative splicing</keyword>
<keyword id="KW-0175">Coiled coil</keyword>
<keyword id="KW-0395">Inflammatory response</keyword>
<keyword id="KW-1267">Proteomics identification</keyword>
<keyword id="KW-1185">Reference proteome</keyword>
<evidence type="ECO:0000255" key="1"/>
<evidence type="ECO:0000256" key="2">
    <source>
        <dbReference type="SAM" id="MobiDB-lite"/>
    </source>
</evidence>
<evidence type="ECO:0000269" key="3">
    <source>
    </source>
</evidence>
<evidence type="ECO:0000269" key="4">
    <source>
    </source>
</evidence>
<evidence type="ECO:0000269" key="5">
    <source>
    </source>
</evidence>
<evidence type="ECO:0000303" key="6">
    <source>
    </source>
</evidence>
<evidence type="ECO:0000305" key="7"/>
<evidence type="ECO:0000312" key="8">
    <source>
        <dbReference type="EMBL" id="AAL02151.1"/>
    </source>
</evidence>
<evidence type="ECO:0000312" key="9">
    <source>
        <dbReference type="EMBL" id="BAB15018.1"/>
    </source>
</evidence>
<evidence type="ECO:0000312" key="10">
    <source>
        <dbReference type="EMBL" id="CAC85929.1"/>
    </source>
</evidence>
<evidence type="ECO:0000312" key="11">
    <source>
        <dbReference type="HGNC" id="HGNC:19315"/>
    </source>
</evidence>
<organism>
    <name type="scientific">Homo sapiens</name>
    <name type="common">Human</name>
    <dbReference type="NCBI Taxonomy" id="9606"/>
    <lineage>
        <taxon>Eukaryota</taxon>
        <taxon>Metazoa</taxon>
        <taxon>Chordata</taxon>
        <taxon>Craniata</taxon>
        <taxon>Vertebrata</taxon>
        <taxon>Euteleostomi</taxon>
        <taxon>Mammalia</taxon>
        <taxon>Eutheria</taxon>
        <taxon>Euarchontoglires</taxon>
        <taxon>Primates</taxon>
        <taxon>Haplorrhini</taxon>
        <taxon>Catarrhini</taxon>
        <taxon>Hominidae</taxon>
        <taxon>Homo</taxon>
    </lineage>
</organism>
<sequence length="325" mass="38943">MAHFVQGTSRMIAAESSTEHKECAEPSTRKNLMNSLEQKIRCLEKQRKELLEVNQQWDQQFRSMKELYERKVAELKTKLDAAERFLSTREKDPHQRQRKDDRQREDDRQRDLTRDRLQREEKEKERLNEELHELKEENKLLKGKNTLANKEKEHYECEIKRLNKALQDALNIKCSFSEDCLRKSRVEFCHEEMRTEMEVLKQQVQIYEEDFKKERSDRERLNQEKEELQQINETSQSQLNRLNSQIKACQMEKEKLEKQLKQMYCPPCNCGLVFHLQDPWVPTGPGAVQKQREHPPDYQWYALDQLPPDVQHKANGLSSVKKVHP</sequence>
<dbReference type="EMBL" id="AF277289">
    <property type="protein sequence ID" value="AAL02151.1"/>
    <property type="molecule type" value="mRNA"/>
</dbReference>
<dbReference type="EMBL" id="AJ320534">
    <property type="protein sequence ID" value="CAC85929.1"/>
    <property type="status" value="ALT_FRAME"/>
    <property type="molecule type" value="mRNA"/>
</dbReference>
<dbReference type="EMBL" id="AK024815">
    <property type="protein sequence ID" value="BAB15018.1"/>
    <property type="status" value="ALT_SEQ"/>
    <property type="molecule type" value="mRNA"/>
</dbReference>
<dbReference type="EMBL" id="AK290409">
    <property type="protein sequence ID" value="BAF83098.1"/>
    <property type="molecule type" value="mRNA"/>
</dbReference>
<dbReference type="EMBL" id="AK301058">
    <property type="protein sequence ID" value="BAG62667.1"/>
    <property type="molecule type" value="mRNA"/>
</dbReference>
<dbReference type="EMBL" id="AK303192">
    <property type="protein sequence ID" value="BAG64285.1"/>
    <property type="molecule type" value="mRNA"/>
</dbReference>
<dbReference type="EMBL" id="AC105254">
    <property type="status" value="NOT_ANNOTATED_CDS"/>
    <property type="molecule type" value="Genomic_DNA"/>
</dbReference>
<dbReference type="EMBL" id="AC108027">
    <property type="status" value="NOT_ANNOTATED_CDS"/>
    <property type="molecule type" value="Genomic_DNA"/>
</dbReference>
<dbReference type="EMBL" id="CH471056">
    <property type="protein sequence ID" value="EAX05264.1"/>
    <property type="molecule type" value="Genomic_DNA"/>
</dbReference>
<dbReference type="EMBL" id="BC128408">
    <property type="protein sequence ID" value="AAI28409.1"/>
    <property type="molecule type" value="mRNA"/>
</dbReference>
<dbReference type="CCDS" id="CCDS3718.1">
    <molecule id="Q96KP6-1"/>
</dbReference>
<dbReference type="CCDS" id="CCDS58925.1">
    <molecule id="Q96KP6-2"/>
</dbReference>
<dbReference type="CCDS" id="CCDS58926.1">
    <molecule id="Q96KP6-3"/>
</dbReference>
<dbReference type="RefSeq" id="NP_001122315.2">
    <molecule id="Q96KP6-2"/>
    <property type="nucleotide sequence ID" value="NM_001128843.2"/>
</dbReference>
<dbReference type="RefSeq" id="NP_001231693.1">
    <molecule id="Q96KP6-3"/>
    <property type="nucleotide sequence ID" value="NM_001244764.2"/>
</dbReference>
<dbReference type="RefSeq" id="NP_079149.3">
    <molecule id="Q96KP6-1"/>
    <property type="nucleotide sequence ID" value="NM_024873.5"/>
</dbReference>
<dbReference type="SMR" id="Q96KP6"/>
<dbReference type="BioGRID" id="123006">
    <property type="interactions" value="36"/>
</dbReference>
<dbReference type="FunCoup" id="Q96KP6">
    <property type="interactions" value="374"/>
</dbReference>
<dbReference type="IntAct" id="Q96KP6">
    <property type="interactions" value="50"/>
</dbReference>
<dbReference type="STRING" id="9606.ENSP00000426613"/>
<dbReference type="iPTMnet" id="Q96KP6"/>
<dbReference type="PhosphoSitePlus" id="Q96KP6"/>
<dbReference type="BioMuta" id="TNIP3"/>
<dbReference type="DMDM" id="269849474"/>
<dbReference type="jPOST" id="Q96KP6"/>
<dbReference type="MassIVE" id="Q96KP6"/>
<dbReference type="PaxDb" id="9606-ENSP00000426613"/>
<dbReference type="PeptideAtlas" id="Q96KP6"/>
<dbReference type="ProteomicsDB" id="5265"/>
<dbReference type="ProteomicsDB" id="5641"/>
<dbReference type="ProteomicsDB" id="77100">
    <molecule id="Q96KP6-1"/>
</dbReference>
<dbReference type="Antibodypedia" id="26709">
    <property type="antibodies" value="122 antibodies from 29 providers"/>
</dbReference>
<dbReference type="DNASU" id="79931"/>
<dbReference type="Ensembl" id="ENST00000057513.8">
    <molecule id="Q96KP6-1"/>
    <property type="protein sequence ID" value="ENSP00000057513.3"/>
    <property type="gene ID" value="ENSG00000050730.16"/>
</dbReference>
<dbReference type="Ensembl" id="ENST00000507879.5">
    <molecule id="Q96KP6-2"/>
    <property type="protein sequence ID" value="ENSP00000427106.1"/>
    <property type="gene ID" value="ENSG00000050730.16"/>
</dbReference>
<dbReference type="Ensembl" id="ENST00000509841.1">
    <molecule id="Q96KP6-3"/>
    <property type="protein sequence ID" value="ENSP00000426613.1"/>
    <property type="gene ID" value="ENSG00000050730.16"/>
</dbReference>
<dbReference type="GeneID" id="79931"/>
<dbReference type="KEGG" id="hsa:79931"/>
<dbReference type="MANE-Select" id="ENST00000057513.8">
    <property type="protein sequence ID" value="ENSP00000057513.3"/>
    <property type="RefSeq nucleotide sequence ID" value="NM_024873.6"/>
    <property type="RefSeq protein sequence ID" value="NP_079149.3"/>
</dbReference>
<dbReference type="UCSC" id="uc010ing.4">
    <molecule id="Q96KP6-1"/>
    <property type="organism name" value="human"/>
</dbReference>
<dbReference type="AGR" id="HGNC:19315"/>
<dbReference type="CTD" id="79931"/>
<dbReference type="DisGeNET" id="79931"/>
<dbReference type="GeneCards" id="TNIP3"/>
<dbReference type="HGNC" id="HGNC:19315">
    <property type="gene designation" value="TNIP3"/>
</dbReference>
<dbReference type="HPA" id="ENSG00000050730">
    <property type="expression patterns" value="Tissue enhanced (lymphoid tissue, urinary bladder)"/>
</dbReference>
<dbReference type="MIM" id="608019">
    <property type="type" value="gene"/>
</dbReference>
<dbReference type="neXtProt" id="NX_Q96KP6"/>
<dbReference type="OpenTargets" id="ENSG00000050730"/>
<dbReference type="PharmGKB" id="PA134934429"/>
<dbReference type="VEuPathDB" id="HostDB:ENSG00000050730"/>
<dbReference type="eggNOG" id="ENOG502RYDP">
    <property type="taxonomic scope" value="Eukaryota"/>
</dbReference>
<dbReference type="GeneTree" id="ENSGT00510000046908"/>
<dbReference type="HOGENOM" id="CLU_052353_0_0_1"/>
<dbReference type="InParanoid" id="Q96KP6"/>
<dbReference type="OMA" id="PDYQWHA"/>
<dbReference type="OrthoDB" id="5969558at2759"/>
<dbReference type="PAN-GO" id="Q96KP6">
    <property type="GO annotations" value="2 GO annotations based on evolutionary models"/>
</dbReference>
<dbReference type="PhylomeDB" id="Q96KP6"/>
<dbReference type="TreeFam" id="TF351138"/>
<dbReference type="PathwayCommons" id="Q96KP6"/>
<dbReference type="Reactome" id="R-HSA-5689896">
    <property type="pathway name" value="Ovarian tumor domain proteases"/>
</dbReference>
<dbReference type="SignaLink" id="Q96KP6"/>
<dbReference type="BioGRID-ORCS" id="79931">
    <property type="hits" value="11 hits in 1144 CRISPR screens"/>
</dbReference>
<dbReference type="GenomeRNAi" id="79931"/>
<dbReference type="Pharos" id="Q96KP6">
    <property type="development level" value="Tbio"/>
</dbReference>
<dbReference type="PRO" id="PR:Q96KP6"/>
<dbReference type="Proteomes" id="UP000005640">
    <property type="component" value="Chromosome 4"/>
</dbReference>
<dbReference type="RNAct" id="Q96KP6">
    <property type="molecule type" value="protein"/>
</dbReference>
<dbReference type="Bgee" id="ENSG00000050730">
    <property type="expression patterns" value="Expressed in male germ line stem cell (sensu Vertebrata) in testis and 103 other cell types or tissues"/>
</dbReference>
<dbReference type="ExpressionAtlas" id="Q96KP6">
    <property type="expression patterns" value="baseline and differential"/>
</dbReference>
<dbReference type="GO" id="GO:0005829">
    <property type="term" value="C:cytosol"/>
    <property type="evidence" value="ECO:0000304"/>
    <property type="project" value="Reactome"/>
</dbReference>
<dbReference type="GO" id="GO:0031593">
    <property type="term" value="F:polyubiquitin modification-dependent protein binding"/>
    <property type="evidence" value="ECO:0000314"/>
    <property type="project" value="UniProtKB"/>
</dbReference>
<dbReference type="GO" id="GO:0071222">
    <property type="term" value="P:cellular response to lipopolysaccharide"/>
    <property type="evidence" value="ECO:0000314"/>
    <property type="project" value="UniProtKB"/>
</dbReference>
<dbReference type="GO" id="GO:0006954">
    <property type="term" value="P:inflammatory response"/>
    <property type="evidence" value="ECO:0007669"/>
    <property type="project" value="UniProtKB-KW"/>
</dbReference>
<dbReference type="GO" id="GO:0002756">
    <property type="term" value="P:MyD88-independent toll-like receptor signaling pathway"/>
    <property type="evidence" value="ECO:0000314"/>
    <property type="project" value="UniProtKB"/>
</dbReference>
<dbReference type="GO" id="GO:0043124">
    <property type="term" value="P:negative regulation of canonical NF-kappaB signal transduction"/>
    <property type="evidence" value="ECO:0000314"/>
    <property type="project" value="UniProtKB"/>
</dbReference>
<dbReference type="GO" id="GO:0006357">
    <property type="term" value="P:regulation of transcription by RNA polymerase II"/>
    <property type="evidence" value="ECO:0000318"/>
    <property type="project" value="GO_Central"/>
</dbReference>
<dbReference type="GO" id="GO:0034142">
    <property type="term" value="P:toll-like receptor 4 signaling pathway"/>
    <property type="evidence" value="ECO:0000314"/>
    <property type="project" value="UniProtKB"/>
</dbReference>
<dbReference type="CDD" id="cd09803">
    <property type="entry name" value="UBAN"/>
    <property type="match status" value="1"/>
</dbReference>
<dbReference type="FunFam" id="1.20.5.990:FF:000004">
    <property type="entry name" value="TNFAIP3 interacting protein 3"/>
    <property type="match status" value="1"/>
</dbReference>
<dbReference type="Gene3D" id="1.20.5.990">
    <property type="entry name" value="Nemo cc2-lz domain - 1d5 darpin complex"/>
    <property type="match status" value="1"/>
</dbReference>
<dbReference type="InterPro" id="IPR032419">
    <property type="entry name" value="CC2-LZ_dom"/>
</dbReference>
<dbReference type="PANTHER" id="PTHR31882:SF2">
    <property type="entry name" value="TNFAIP3-INTERACTING PROTEIN 3"/>
    <property type="match status" value="1"/>
</dbReference>
<dbReference type="PANTHER" id="PTHR31882">
    <property type="entry name" value="TNFAIP3-INTERACTING PROTEIN COILED COIL FAMILY MEMBER"/>
    <property type="match status" value="1"/>
</dbReference>
<dbReference type="Pfam" id="PF16516">
    <property type="entry name" value="CC2-LZ"/>
    <property type="match status" value="1"/>
</dbReference>